<dbReference type="EC" id="2.8.1.13" evidence="1"/>
<dbReference type="EMBL" id="CP000361">
    <property type="protein sequence ID" value="ABV66760.1"/>
    <property type="molecule type" value="Genomic_DNA"/>
</dbReference>
<dbReference type="SMR" id="A8ES36"/>
<dbReference type="STRING" id="367737.Abu_0485"/>
<dbReference type="GeneID" id="24305565"/>
<dbReference type="KEGG" id="abu:Abu_0485"/>
<dbReference type="eggNOG" id="COG0482">
    <property type="taxonomic scope" value="Bacteria"/>
</dbReference>
<dbReference type="HOGENOM" id="CLU_035188_1_0_7"/>
<dbReference type="Proteomes" id="UP000001136">
    <property type="component" value="Chromosome"/>
</dbReference>
<dbReference type="GO" id="GO:0005737">
    <property type="term" value="C:cytoplasm"/>
    <property type="evidence" value="ECO:0007669"/>
    <property type="project" value="UniProtKB-SubCell"/>
</dbReference>
<dbReference type="GO" id="GO:0005524">
    <property type="term" value="F:ATP binding"/>
    <property type="evidence" value="ECO:0007669"/>
    <property type="project" value="UniProtKB-KW"/>
</dbReference>
<dbReference type="GO" id="GO:0000049">
    <property type="term" value="F:tRNA binding"/>
    <property type="evidence" value="ECO:0007669"/>
    <property type="project" value="UniProtKB-KW"/>
</dbReference>
<dbReference type="GO" id="GO:0103016">
    <property type="term" value="F:tRNA-uridine 2-sulfurtransferase activity"/>
    <property type="evidence" value="ECO:0007669"/>
    <property type="project" value="UniProtKB-EC"/>
</dbReference>
<dbReference type="GO" id="GO:0002143">
    <property type="term" value="P:tRNA wobble position uridine thiolation"/>
    <property type="evidence" value="ECO:0007669"/>
    <property type="project" value="TreeGrafter"/>
</dbReference>
<dbReference type="CDD" id="cd01998">
    <property type="entry name" value="MnmA_TRMU-like"/>
    <property type="match status" value="1"/>
</dbReference>
<dbReference type="FunFam" id="2.30.30.280:FF:000001">
    <property type="entry name" value="tRNA-specific 2-thiouridylase MnmA"/>
    <property type="match status" value="1"/>
</dbReference>
<dbReference type="FunFam" id="2.40.30.10:FF:000023">
    <property type="entry name" value="tRNA-specific 2-thiouridylase MnmA"/>
    <property type="match status" value="1"/>
</dbReference>
<dbReference type="FunFam" id="3.40.50.620:FF:000115">
    <property type="entry name" value="tRNA-specific 2-thiouridylase MnmA"/>
    <property type="match status" value="1"/>
</dbReference>
<dbReference type="Gene3D" id="2.30.30.280">
    <property type="entry name" value="Adenine nucleotide alpha hydrolases-like domains"/>
    <property type="match status" value="1"/>
</dbReference>
<dbReference type="Gene3D" id="3.40.50.620">
    <property type="entry name" value="HUPs"/>
    <property type="match status" value="1"/>
</dbReference>
<dbReference type="Gene3D" id="2.40.30.10">
    <property type="entry name" value="Translation factors"/>
    <property type="match status" value="1"/>
</dbReference>
<dbReference type="HAMAP" id="MF_00144">
    <property type="entry name" value="tRNA_thiouridyl_MnmA"/>
    <property type="match status" value="1"/>
</dbReference>
<dbReference type="InterPro" id="IPR004506">
    <property type="entry name" value="MnmA-like"/>
</dbReference>
<dbReference type="InterPro" id="IPR046885">
    <property type="entry name" value="MnmA-like_C"/>
</dbReference>
<dbReference type="InterPro" id="IPR046884">
    <property type="entry name" value="MnmA-like_central"/>
</dbReference>
<dbReference type="InterPro" id="IPR023382">
    <property type="entry name" value="MnmA-like_central_sf"/>
</dbReference>
<dbReference type="InterPro" id="IPR014729">
    <property type="entry name" value="Rossmann-like_a/b/a_fold"/>
</dbReference>
<dbReference type="NCBIfam" id="NF001138">
    <property type="entry name" value="PRK00143.1"/>
    <property type="match status" value="1"/>
</dbReference>
<dbReference type="NCBIfam" id="TIGR00420">
    <property type="entry name" value="trmU"/>
    <property type="match status" value="1"/>
</dbReference>
<dbReference type="PANTHER" id="PTHR11933:SF5">
    <property type="entry name" value="MITOCHONDRIAL TRNA-SPECIFIC 2-THIOURIDYLASE 1"/>
    <property type="match status" value="1"/>
</dbReference>
<dbReference type="PANTHER" id="PTHR11933">
    <property type="entry name" value="TRNA 5-METHYLAMINOMETHYL-2-THIOURIDYLATE -METHYLTRANSFERASE"/>
    <property type="match status" value="1"/>
</dbReference>
<dbReference type="Pfam" id="PF03054">
    <property type="entry name" value="tRNA_Me_trans"/>
    <property type="match status" value="1"/>
</dbReference>
<dbReference type="Pfam" id="PF20258">
    <property type="entry name" value="tRNA_Me_trans_C"/>
    <property type="match status" value="1"/>
</dbReference>
<dbReference type="Pfam" id="PF20259">
    <property type="entry name" value="tRNA_Me_trans_M"/>
    <property type="match status" value="1"/>
</dbReference>
<dbReference type="SUPFAM" id="SSF52402">
    <property type="entry name" value="Adenine nucleotide alpha hydrolases-like"/>
    <property type="match status" value="1"/>
</dbReference>
<evidence type="ECO:0000255" key="1">
    <source>
        <dbReference type="HAMAP-Rule" id="MF_00144"/>
    </source>
</evidence>
<keyword id="KW-0067">ATP-binding</keyword>
<keyword id="KW-0963">Cytoplasm</keyword>
<keyword id="KW-1015">Disulfide bond</keyword>
<keyword id="KW-0547">Nucleotide-binding</keyword>
<keyword id="KW-1185">Reference proteome</keyword>
<keyword id="KW-0694">RNA-binding</keyword>
<keyword id="KW-0808">Transferase</keyword>
<keyword id="KW-0819">tRNA processing</keyword>
<keyword id="KW-0820">tRNA-binding</keyword>
<gene>
    <name evidence="1" type="primary">mnmA2</name>
    <name type="ordered locus">Abu_0485</name>
</gene>
<proteinExistence type="inferred from homology"/>
<sequence>MNKNKKIVVGMSGGVDSSVTALLLKQQGYDVVGLFMRNWEYGIKGSQCPNRIEFEDAKKVGALIGIEVRGKDFVKEYRDRVFDVFLEGLKQGLTPNPDILCNKEIKFNVFLNEAKSMGADMIATGHYAKIAKYKDHFVLDTPKDNTKDQSYFLHALSSEQLSHAMFPLGDLTKKEVREIARAHNLPVSDKKDSTGICFIGNQKFDEFITQHLQAIPGDILDENGKVIGKHKGLVCYTLGQRKGIGLGGIKGNESENNTHKPWFVASKDVVNNTLTIVQDTNHPLLMSKTVEASHMHWVLEEAPKVGDKLMAQVRYRQQKQACTVVEANEEKVVVEFDNPQRAVTLGQSLVLYSGDYCLGGGFISFYK</sequence>
<name>MNMA2_ALIB4</name>
<comment type="function">
    <text evidence="1">Catalyzes the 2-thiolation of uridine at the wobble position (U34) of tRNA, leading to the formation of s(2)U34.</text>
</comment>
<comment type="catalytic activity">
    <reaction evidence="1">
        <text>S-sulfanyl-L-cysteinyl-[protein] + uridine(34) in tRNA + AH2 + ATP = 2-thiouridine(34) in tRNA + L-cysteinyl-[protein] + A + AMP + diphosphate + H(+)</text>
        <dbReference type="Rhea" id="RHEA:47032"/>
        <dbReference type="Rhea" id="RHEA-COMP:10131"/>
        <dbReference type="Rhea" id="RHEA-COMP:11726"/>
        <dbReference type="Rhea" id="RHEA-COMP:11727"/>
        <dbReference type="Rhea" id="RHEA-COMP:11728"/>
        <dbReference type="ChEBI" id="CHEBI:13193"/>
        <dbReference type="ChEBI" id="CHEBI:15378"/>
        <dbReference type="ChEBI" id="CHEBI:17499"/>
        <dbReference type="ChEBI" id="CHEBI:29950"/>
        <dbReference type="ChEBI" id="CHEBI:30616"/>
        <dbReference type="ChEBI" id="CHEBI:33019"/>
        <dbReference type="ChEBI" id="CHEBI:61963"/>
        <dbReference type="ChEBI" id="CHEBI:65315"/>
        <dbReference type="ChEBI" id="CHEBI:87170"/>
        <dbReference type="ChEBI" id="CHEBI:456215"/>
        <dbReference type="EC" id="2.8.1.13"/>
    </reaction>
</comment>
<comment type="subcellular location">
    <subcellularLocation>
        <location evidence="1">Cytoplasm</location>
    </subcellularLocation>
</comment>
<comment type="similarity">
    <text evidence="1">Belongs to the MnmA/TRMU family.</text>
</comment>
<accession>A8ES36</accession>
<feature type="chain" id="PRO_0000349515" description="tRNA-specific 2-thiouridylase MnmA 2">
    <location>
        <begin position="1"/>
        <end position="367"/>
    </location>
</feature>
<feature type="region of interest" description="Interaction with target base in tRNA" evidence="1">
    <location>
        <begin position="96"/>
        <end position="98"/>
    </location>
</feature>
<feature type="region of interest" description="Interaction with tRNA" evidence="1">
    <location>
        <begin position="147"/>
        <end position="149"/>
    </location>
</feature>
<feature type="region of interest" description="Interaction with tRNA" evidence="1">
    <location>
        <begin position="314"/>
        <end position="315"/>
    </location>
</feature>
<feature type="active site" description="Nucleophile" evidence="1">
    <location>
        <position position="101"/>
    </location>
</feature>
<feature type="active site" description="Cysteine persulfide intermediate" evidence="1">
    <location>
        <position position="197"/>
    </location>
</feature>
<feature type="binding site" evidence="1">
    <location>
        <begin position="10"/>
        <end position="17"/>
    </location>
    <ligand>
        <name>ATP</name>
        <dbReference type="ChEBI" id="CHEBI:30616"/>
    </ligand>
</feature>
<feature type="binding site" evidence="1">
    <location>
        <position position="36"/>
    </location>
    <ligand>
        <name>ATP</name>
        <dbReference type="ChEBI" id="CHEBI:30616"/>
    </ligand>
</feature>
<feature type="binding site" evidence="1">
    <location>
        <position position="125"/>
    </location>
    <ligand>
        <name>ATP</name>
        <dbReference type="ChEBI" id="CHEBI:30616"/>
    </ligand>
</feature>
<feature type="site" description="Interaction with tRNA" evidence="1">
    <location>
        <position position="126"/>
    </location>
</feature>
<feature type="site" description="Interaction with tRNA" evidence="1">
    <location>
        <position position="347"/>
    </location>
</feature>
<feature type="disulfide bond" description="Alternate" evidence="1">
    <location>
        <begin position="101"/>
        <end position="197"/>
    </location>
</feature>
<protein>
    <recommendedName>
        <fullName evidence="1">tRNA-specific 2-thiouridylase MnmA 2</fullName>
        <ecNumber evidence="1">2.8.1.13</ecNumber>
    </recommendedName>
</protein>
<organism>
    <name type="scientific">Aliarcobacter butzleri (strain RM4018)</name>
    <name type="common">Arcobacter butzleri</name>
    <dbReference type="NCBI Taxonomy" id="367737"/>
    <lineage>
        <taxon>Bacteria</taxon>
        <taxon>Pseudomonadati</taxon>
        <taxon>Campylobacterota</taxon>
        <taxon>Epsilonproteobacteria</taxon>
        <taxon>Campylobacterales</taxon>
        <taxon>Arcobacteraceae</taxon>
        <taxon>Aliarcobacter</taxon>
    </lineage>
</organism>
<reference key="1">
    <citation type="journal article" date="2007" name="PLoS ONE">
        <title>The complete genome sequence and analysis of the Epsilonproteobacterium Arcobacter butzleri.</title>
        <authorList>
            <person name="Miller W.G."/>
            <person name="Parker C.T."/>
            <person name="Rubenfield M."/>
            <person name="Mendz G.L."/>
            <person name="Woesten M.M.S.M."/>
            <person name="Ussery D.W."/>
            <person name="Stolz J.F."/>
            <person name="Binnewies T.T."/>
            <person name="Hallin P.F."/>
            <person name="Wang G."/>
            <person name="Malek J.A."/>
            <person name="Rogosin A."/>
            <person name="Stanker L.H."/>
            <person name="Mandrell R.E."/>
        </authorList>
    </citation>
    <scope>NUCLEOTIDE SEQUENCE [LARGE SCALE GENOMIC DNA]</scope>
    <source>
        <strain>RM4018</strain>
    </source>
</reference>